<keyword id="KW-0007">Acetylation</keyword>
<keyword id="KW-0903">Direct protein sequencing</keyword>
<keyword id="KW-0274">FAD</keyword>
<keyword id="KW-0285">Flavoprotein</keyword>
<keyword id="KW-0496">Mitochondrion</keyword>
<keyword id="KW-0560">Oxidoreductase</keyword>
<keyword id="KW-1185">Reference proteome</keyword>
<keyword id="KW-0809">Transit peptide</keyword>
<protein>
    <recommendedName>
        <fullName>Glutaryl-CoA dehydrogenase, mitochondrial</fullName>
        <shortName>GCD</shortName>
        <ecNumber>1.3.8.6</ecNumber>
    </recommendedName>
</protein>
<organism>
    <name type="scientific">Sus scrofa</name>
    <name type="common">Pig</name>
    <dbReference type="NCBI Taxonomy" id="9823"/>
    <lineage>
        <taxon>Eukaryota</taxon>
        <taxon>Metazoa</taxon>
        <taxon>Chordata</taxon>
        <taxon>Craniata</taxon>
        <taxon>Vertebrata</taxon>
        <taxon>Euteleostomi</taxon>
        <taxon>Mammalia</taxon>
        <taxon>Eutheria</taxon>
        <taxon>Laurasiatheria</taxon>
        <taxon>Artiodactyla</taxon>
        <taxon>Suina</taxon>
        <taxon>Suidae</taxon>
        <taxon>Sus</taxon>
    </lineage>
</organism>
<sequence>KGGKTQGRSAKSSRPEFDWRDPLVLEEQLTADEILIRDTFRTYCQEHLMPRIVLANRNEVFHREIISEMGELGVLGPTIKGYGCAGVSSVAYGLLARELERVDSGYRSAMSVQSSLVMHPIYAYGSEEQQQQKYLPRLAKGELLGCFGLTEPNHGSDPGSMETRALHNPSNRSYTLNGAKTWITNSPVADLFVVWARCEDNCIRGFLLEKGMRGLSAPKIEGKFSLRASATGMIIMDDVEVPEENVLPKASSLAVPFGCLNNARYGISWGVLGAAEFCLHTARQYTLDRIQFGVPLAKNQLIQRKLADMLTEITLGLHACLQLGRLKDQDKVTPEMVSLLKRNNCGKALDIARQARDMLGGNGISDEYHVIRHAMNLEAVNTYEGTHDIHALILGRAITGIQAFTTDK</sequence>
<feature type="transit peptide" description="Mitochondrion" evidence="3">
    <location>
        <begin position="1" status="less than"/>
        <end position="13"/>
    </location>
</feature>
<feature type="chain" id="PRO_0000000529" description="Glutaryl-CoA dehydrogenase, mitochondrial">
    <location>
        <begin position="14"/>
        <end position="408"/>
    </location>
</feature>
<feature type="active site" description="Proton acceptor" evidence="1">
    <location>
        <position position="384"/>
    </location>
</feature>
<feature type="binding site" evidence="1">
    <location>
        <begin position="107"/>
        <end position="108"/>
    </location>
    <ligand>
        <name>substrate</name>
    </ligand>
</feature>
<feature type="binding site" evidence="1">
    <location>
        <begin position="147"/>
        <end position="156"/>
    </location>
    <ligand>
        <name>FAD</name>
        <dbReference type="ChEBI" id="CHEBI:57692"/>
    </ligand>
</feature>
<feature type="binding site" evidence="1">
    <location>
        <position position="156"/>
    </location>
    <ligand>
        <name>FAD</name>
        <dbReference type="ChEBI" id="CHEBI:57692"/>
    </ligand>
</feature>
<feature type="binding site" evidence="1">
    <location>
        <position position="156"/>
    </location>
    <ligand>
        <name>substrate</name>
    </ligand>
</feature>
<feature type="binding site" evidence="1">
    <location>
        <begin position="182"/>
        <end position="184"/>
    </location>
    <ligand>
        <name>FAD</name>
        <dbReference type="ChEBI" id="CHEBI:57692"/>
    </ligand>
</feature>
<feature type="binding site" evidence="1">
    <location>
        <begin position="257"/>
        <end position="264"/>
    </location>
    <ligand>
        <name>substrate</name>
    </ligand>
</feature>
<feature type="binding site" evidence="1">
    <location>
        <position position="289"/>
    </location>
    <ligand>
        <name>FAD</name>
        <dbReference type="ChEBI" id="CHEBI:57692"/>
    </ligand>
</feature>
<feature type="binding site" evidence="1">
    <location>
        <position position="300"/>
    </location>
    <ligand>
        <name>FAD</name>
        <dbReference type="ChEBI" id="CHEBI:57692"/>
    </ligand>
</feature>
<feature type="binding site" evidence="1">
    <location>
        <begin position="357"/>
        <end position="361"/>
    </location>
    <ligand>
        <name>FAD</name>
        <dbReference type="ChEBI" id="CHEBI:57692"/>
    </ligand>
</feature>
<feature type="binding site" evidence="1">
    <location>
        <position position="385"/>
    </location>
    <ligand>
        <name>substrate</name>
    </ligand>
</feature>
<feature type="binding site" evidence="1">
    <location>
        <begin position="386"/>
        <end position="388"/>
    </location>
    <ligand>
        <name>FAD</name>
        <dbReference type="ChEBI" id="CHEBI:57692"/>
    </ligand>
</feature>
<feature type="binding site" evidence="1">
    <location>
        <position position="386"/>
    </location>
    <ligand>
        <name>FAD</name>
        <dbReference type="ChEBI" id="CHEBI:57692"/>
    </ligand>
</feature>
<feature type="binding site" evidence="1">
    <location>
        <position position="404"/>
    </location>
    <ligand>
        <name>FAD</name>
        <dbReference type="ChEBI" id="CHEBI:57692"/>
    </ligand>
</feature>
<feature type="modified residue" description="N6-acetyllysine" evidence="2">
    <location>
        <position position="210"/>
    </location>
</feature>
<feature type="non-terminal residue">
    <location>
        <position position="1"/>
    </location>
</feature>
<reference key="1">
    <citation type="journal article" date="1992" name="Prog. Clin. Biol. Res.">
        <title>Pork and human cDNAs encoding glutaryl-CoA dehydrogenase.</title>
        <authorList>
            <person name="Goodman S.I."/>
            <person name="Kratz L.E."/>
            <person name="Frerman F.E."/>
        </authorList>
    </citation>
    <scope>NUCLEOTIDE SEQUENCE</scope>
    <scope>PROTEIN SEQUENCE OF 14-38 AND 375-407</scope>
    <scope>FUNCTION</scope>
    <source>
        <tissue>Liver</tissue>
    </source>
</reference>
<evidence type="ECO:0000250" key="1"/>
<evidence type="ECO:0000250" key="2">
    <source>
        <dbReference type="UniProtKB" id="Q60759"/>
    </source>
</evidence>
<evidence type="ECO:0000269" key="3">
    <source>
    </source>
</evidence>
<evidence type="ECO:0000305" key="4"/>
<gene>
    <name type="primary">GCDH</name>
</gene>
<name>GCDH_PIG</name>
<dbReference type="EC" id="1.3.8.6"/>
<dbReference type="SMR" id="P81140"/>
<dbReference type="FunCoup" id="P81140">
    <property type="interactions" value="1260"/>
</dbReference>
<dbReference type="STRING" id="9823.ENSSSCP00000056939"/>
<dbReference type="PaxDb" id="9823-ENSSSCP00000014599"/>
<dbReference type="PeptideAtlas" id="P81140"/>
<dbReference type="eggNOG" id="KOG0138">
    <property type="taxonomic scope" value="Eukaryota"/>
</dbReference>
<dbReference type="InParanoid" id="P81140"/>
<dbReference type="SABIO-RK" id="P81140"/>
<dbReference type="UniPathway" id="UPA00224"/>
<dbReference type="UniPathway" id="UPA00225"/>
<dbReference type="Proteomes" id="UP000008227">
    <property type="component" value="Unplaced"/>
</dbReference>
<dbReference type="Proteomes" id="UP000314985">
    <property type="component" value="Unplaced"/>
</dbReference>
<dbReference type="Proteomes" id="UP000694570">
    <property type="component" value="Unplaced"/>
</dbReference>
<dbReference type="Proteomes" id="UP000694571">
    <property type="component" value="Unplaced"/>
</dbReference>
<dbReference type="Proteomes" id="UP000694720">
    <property type="component" value="Unplaced"/>
</dbReference>
<dbReference type="Proteomes" id="UP000694722">
    <property type="component" value="Unplaced"/>
</dbReference>
<dbReference type="Proteomes" id="UP000694723">
    <property type="component" value="Unplaced"/>
</dbReference>
<dbReference type="Proteomes" id="UP000694724">
    <property type="component" value="Unplaced"/>
</dbReference>
<dbReference type="Proteomes" id="UP000694725">
    <property type="component" value="Unplaced"/>
</dbReference>
<dbReference type="Proteomes" id="UP000694726">
    <property type="component" value="Unplaced"/>
</dbReference>
<dbReference type="Proteomes" id="UP000694727">
    <property type="component" value="Unplaced"/>
</dbReference>
<dbReference type="Proteomes" id="UP000694728">
    <property type="component" value="Unplaced"/>
</dbReference>
<dbReference type="GO" id="GO:0005759">
    <property type="term" value="C:mitochondrial matrix"/>
    <property type="evidence" value="ECO:0007669"/>
    <property type="project" value="UniProtKB-SubCell"/>
</dbReference>
<dbReference type="GO" id="GO:0000062">
    <property type="term" value="F:fatty-acyl-CoA binding"/>
    <property type="evidence" value="ECO:0000318"/>
    <property type="project" value="GO_Central"/>
</dbReference>
<dbReference type="GO" id="GO:0050660">
    <property type="term" value="F:flavin adenine dinucleotide binding"/>
    <property type="evidence" value="ECO:0000318"/>
    <property type="project" value="GO_Central"/>
</dbReference>
<dbReference type="GO" id="GO:0004361">
    <property type="term" value="F:glutaryl-CoA dehydrogenase activity"/>
    <property type="evidence" value="ECO:0000318"/>
    <property type="project" value="GO_Central"/>
</dbReference>
<dbReference type="GO" id="GO:0033539">
    <property type="term" value="P:fatty acid beta-oxidation using acyl-CoA dehydrogenase"/>
    <property type="evidence" value="ECO:0000250"/>
    <property type="project" value="UniProtKB"/>
</dbReference>
<dbReference type="GO" id="GO:0046949">
    <property type="term" value="P:fatty-acyl-CoA biosynthetic process"/>
    <property type="evidence" value="ECO:0000318"/>
    <property type="project" value="GO_Central"/>
</dbReference>
<dbReference type="GO" id="GO:0006568">
    <property type="term" value="P:L-tryptophan metabolic process"/>
    <property type="evidence" value="ECO:0007669"/>
    <property type="project" value="UniProtKB-UniPathway"/>
</dbReference>
<dbReference type="CDD" id="cd01151">
    <property type="entry name" value="GCD"/>
    <property type="match status" value="1"/>
</dbReference>
<dbReference type="FunFam" id="1.20.140.10:FF:000006">
    <property type="entry name" value="Glutaryl-CoA dehydrogenase, mitochondrial"/>
    <property type="match status" value="1"/>
</dbReference>
<dbReference type="FunFam" id="2.40.110.10:FF:000008">
    <property type="entry name" value="Glutaryl-CoA dehydrogenase, mitochondrial"/>
    <property type="match status" value="1"/>
</dbReference>
<dbReference type="FunFam" id="1.10.540.10:FF:000003">
    <property type="entry name" value="glutaryl-CoA dehydrogenase, mitochondrial"/>
    <property type="match status" value="1"/>
</dbReference>
<dbReference type="Gene3D" id="1.10.540.10">
    <property type="entry name" value="Acyl-CoA dehydrogenase/oxidase, N-terminal domain"/>
    <property type="match status" value="1"/>
</dbReference>
<dbReference type="Gene3D" id="2.40.110.10">
    <property type="entry name" value="Butyryl-CoA Dehydrogenase, subunit A, domain 2"/>
    <property type="match status" value="1"/>
</dbReference>
<dbReference type="Gene3D" id="1.20.140.10">
    <property type="entry name" value="Butyryl-CoA Dehydrogenase, subunit A, domain 3"/>
    <property type="match status" value="1"/>
</dbReference>
<dbReference type="InterPro" id="IPR006089">
    <property type="entry name" value="Acyl-CoA_DH_CS"/>
</dbReference>
<dbReference type="InterPro" id="IPR006091">
    <property type="entry name" value="Acyl-CoA_Oxase/DH_mid-dom"/>
</dbReference>
<dbReference type="InterPro" id="IPR046373">
    <property type="entry name" value="Acyl-CoA_Oxase/DH_mid-dom_sf"/>
</dbReference>
<dbReference type="InterPro" id="IPR036250">
    <property type="entry name" value="AcylCo_DH-like_C"/>
</dbReference>
<dbReference type="InterPro" id="IPR009075">
    <property type="entry name" value="AcylCo_DH/oxidase_C"/>
</dbReference>
<dbReference type="InterPro" id="IPR013786">
    <property type="entry name" value="AcylCoA_DH/ox_N"/>
</dbReference>
<dbReference type="InterPro" id="IPR037069">
    <property type="entry name" value="AcylCoA_DH/ox_N_sf"/>
</dbReference>
<dbReference type="InterPro" id="IPR009100">
    <property type="entry name" value="AcylCoA_DH/oxidase_NM_dom_sf"/>
</dbReference>
<dbReference type="InterPro" id="IPR052033">
    <property type="entry name" value="Glutaryl-CoA_DH_mitochondrial"/>
</dbReference>
<dbReference type="PANTHER" id="PTHR42807">
    <property type="entry name" value="GLUTARYL-COA DEHYDROGENASE, MITOCHONDRIAL"/>
    <property type="match status" value="1"/>
</dbReference>
<dbReference type="PANTHER" id="PTHR42807:SF1">
    <property type="entry name" value="GLUTARYL-COA DEHYDROGENASE, MITOCHONDRIAL"/>
    <property type="match status" value="1"/>
</dbReference>
<dbReference type="Pfam" id="PF00441">
    <property type="entry name" value="Acyl-CoA_dh_1"/>
    <property type="match status" value="1"/>
</dbReference>
<dbReference type="Pfam" id="PF02770">
    <property type="entry name" value="Acyl-CoA_dh_M"/>
    <property type="match status" value="1"/>
</dbReference>
<dbReference type="Pfam" id="PF02771">
    <property type="entry name" value="Acyl-CoA_dh_N"/>
    <property type="match status" value="1"/>
</dbReference>
<dbReference type="SUPFAM" id="SSF47203">
    <property type="entry name" value="Acyl-CoA dehydrogenase C-terminal domain-like"/>
    <property type="match status" value="1"/>
</dbReference>
<dbReference type="SUPFAM" id="SSF56645">
    <property type="entry name" value="Acyl-CoA dehydrogenase NM domain-like"/>
    <property type="match status" value="1"/>
</dbReference>
<dbReference type="PROSITE" id="PS00073">
    <property type="entry name" value="ACYL_COA_DH_2"/>
    <property type="match status" value="1"/>
</dbReference>
<accession>P81140</accession>
<proteinExistence type="evidence at protein level"/>
<comment type="function">
    <text evidence="3">Catalyzes the oxidative decarboxylation of glutaryl-CoA to crotonyl-CoA and CO(2) in the degradative pathway of L-lysine, L-hydroxylysine, and L-tryptophan metabolism. It uses electron transfer flavoprotein as its electron acceptor.</text>
</comment>
<comment type="catalytic activity">
    <reaction>
        <text>glutaryl-CoA + oxidized [electron-transfer flavoprotein] + 2 H(+) = (2E)-butenoyl-CoA + reduced [electron-transfer flavoprotein] + CO2</text>
        <dbReference type="Rhea" id="RHEA:13389"/>
        <dbReference type="Rhea" id="RHEA-COMP:10685"/>
        <dbReference type="Rhea" id="RHEA-COMP:10686"/>
        <dbReference type="ChEBI" id="CHEBI:15378"/>
        <dbReference type="ChEBI" id="CHEBI:16526"/>
        <dbReference type="ChEBI" id="CHEBI:57332"/>
        <dbReference type="ChEBI" id="CHEBI:57378"/>
        <dbReference type="ChEBI" id="CHEBI:57692"/>
        <dbReference type="ChEBI" id="CHEBI:58307"/>
        <dbReference type="EC" id="1.3.8.6"/>
    </reaction>
</comment>
<comment type="cofactor">
    <cofactor>
        <name>FAD</name>
        <dbReference type="ChEBI" id="CHEBI:57692"/>
    </cofactor>
</comment>
<comment type="pathway">
    <text>Amino-acid metabolism; lysine degradation.</text>
</comment>
<comment type="pathway">
    <text>Amino-acid metabolism; tryptophan metabolism.</text>
</comment>
<comment type="subunit">
    <text>Homotetramer.</text>
</comment>
<comment type="subcellular location">
    <subcellularLocation>
        <location>Mitochondrion matrix</location>
    </subcellularLocation>
</comment>
<comment type="similarity">
    <text evidence="4">Belongs to the acyl-CoA dehydrogenase family.</text>
</comment>